<reference key="1">
    <citation type="journal article" date="1998" name="Genomics">
        <title>Human hydroxysteroid sulfotransferase SULT2B1: two enzymes encoded by a single chromosome 19 gene.</title>
        <authorList>
            <person name="Her C."/>
            <person name="Wood T.C."/>
            <person name="Eichler E.E."/>
            <person name="Mohrenweiser H.W."/>
            <person name="Ramagli L.S."/>
            <person name="Siciliano M.J."/>
            <person name="Weinshilboum R.M."/>
        </authorList>
    </citation>
    <scope>NUCLEOTIDE SEQUENCE [GENOMIC DNA]</scope>
    <scope>NUCLEOTIDE SEQUENCE [MRNA] (ISOFORMS 1 AND 2)</scope>
    <scope>FUNCTION</scope>
    <scope>TISSUE SPECIFICITY</scope>
    <scope>CATALYTIC ACTIVITY</scope>
    <source>
        <tissue>Placenta</tissue>
    </source>
</reference>
<reference key="2">
    <citation type="journal article" date="2004" name="Nature">
        <title>The DNA sequence and biology of human chromosome 19.</title>
        <authorList>
            <person name="Grimwood J."/>
            <person name="Gordon L.A."/>
            <person name="Olsen A.S."/>
            <person name="Terry A."/>
            <person name="Schmutz J."/>
            <person name="Lamerdin J.E."/>
            <person name="Hellsten U."/>
            <person name="Goodstein D."/>
            <person name="Couronne O."/>
            <person name="Tran-Gyamfi M."/>
            <person name="Aerts A."/>
            <person name="Altherr M."/>
            <person name="Ashworth L."/>
            <person name="Bajorek E."/>
            <person name="Black S."/>
            <person name="Branscomb E."/>
            <person name="Caenepeel S."/>
            <person name="Carrano A.V."/>
            <person name="Caoile C."/>
            <person name="Chan Y.M."/>
            <person name="Christensen M."/>
            <person name="Cleland C.A."/>
            <person name="Copeland A."/>
            <person name="Dalin E."/>
            <person name="Dehal P."/>
            <person name="Denys M."/>
            <person name="Detter J.C."/>
            <person name="Escobar J."/>
            <person name="Flowers D."/>
            <person name="Fotopulos D."/>
            <person name="Garcia C."/>
            <person name="Georgescu A.M."/>
            <person name="Glavina T."/>
            <person name="Gomez M."/>
            <person name="Gonzales E."/>
            <person name="Groza M."/>
            <person name="Hammon N."/>
            <person name="Hawkins T."/>
            <person name="Haydu L."/>
            <person name="Ho I."/>
            <person name="Huang W."/>
            <person name="Israni S."/>
            <person name="Jett J."/>
            <person name="Kadner K."/>
            <person name="Kimball H."/>
            <person name="Kobayashi A."/>
            <person name="Larionov V."/>
            <person name="Leem S.-H."/>
            <person name="Lopez F."/>
            <person name="Lou Y."/>
            <person name="Lowry S."/>
            <person name="Malfatti S."/>
            <person name="Martinez D."/>
            <person name="McCready P.M."/>
            <person name="Medina C."/>
            <person name="Morgan J."/>
            <person name="Nelson K."/>
            <person name="Nolan M."/>
            <person name="Ovcharenko I."/>
            <person name="Pitluck S."/>
            <person name="Pollard M."/>
            <person name="Popkie A.P."/>
            <person name="Predki P."/>
            <person name="Quan G."/>
            <person name="Ramirez L."/>
            <person name="Rash S."/>
            <person name="Retterer J."/>
            <person name="Rodriguez A."/>
            <person name="Rogers S."/>
            <person name="Salamov A."/>
            <person name="Salazar A."/>
            <person name="She X."/>
            <person name="Smith D."/>
            <person name="Slezak T."/>
            <person name="Solovyev V."/>
            <person name="Thayer N."/>
            <person name="Tice H."/>
            <person name="Tsai M."/>
            <person name="Ustaszewska A."/>
            <person name="Vo N."/>
            <person name="Wagner M."/>
            <person name="Wheeler J."/>
            <person name="Wu K."/>
            <person name="Xie G."/>
            <person name="Yang J."/>
            <person name="Dubchak I."/>
            <person name="Furey T.S."/>
            <person name="DeJong P."/>
            <person name="Dickson M."/>
            <person name="Gordon D."/>
            <person name="Eichler E.E."/>
            <person name="Pennacchio L.A."/>
            <person name="Richardson P."/>
            <person name="Stubbs L."/>
            <person name="Rokhsar D.S."/>
            <person name="Myers R.M."/>
            <person name="Rubin E.M."/>
            <person name="Lucas S.M."/>
        </authorList>
    </citation>
    <scope>NUCLEOTIDE SEQUENCE [LARGE SCALE GENOMIC DNA]</scope>
</reference>
<reference key="3">
    <citation type="journal article" date="2004" name="Genome Res.">
        <title>The status, quality, and expansion of the NIH full-length cDNA project: the Mammalian Gene Collection (MGC).</title>
        <authorList>
            <consortium name="The MGC Project Team"/>
        </authorList>
    </citation>
    <scope>NUCLEOTIDE SEQUENCE [LARGE SCALE MRNA] (ISOFORM 1)</scope>
    <source>
        <tissue>Skin</tissue>
    </source>
</reference>
<reference key="4">
    <citation type="journal article" date="2002" name="J. Biol. Chem.">
        <title>Mutational analysis of human hydroxysteroid sulfotransferase SULT2B1 isoforms reveals that exon 1B of the SULT2B1 gene produces cholesterol sulfotransferase, whereas exon 1A yields pregnenolone sulfotransferase.</title>
        <authorList>
            <person name="Fuda H."/>
            <person name="Lee Y.C."/>
            <person name="Shimizu C."/>
            <person name="Javitt N.B."/>
            <person name="Strott C.A."/>
        </authorList>
    </citation>
    <scope>FUNCTION (ISOFORMS 1 AND 2)</scope>
    <scope>MUTAGENESIS OF 1-MET--ASP-18; 1-MET--ILE-23; ASP-19; ILE-20; SER-21; GLU-22 AND ILE-23</scope>
    <scope>CATALYTIC ACTIVITY</scope>
    <scope>FUNCTION</scope>
</reference>
<reference key="5">
    <citation type="journal article" date="2006" name="Drug Metab. Dispos.">
        <title>Characterization of proline-serine-rich carboxyl terminus in human sulfotransferase 2B1b: immunogenicity, subcellular localization, kinetic properties, and phosphorylation.</title>
        <authorList>
            <person name="He D."/>
            <person name="Falany C.N."/>
        </authorList>
    </citation>
    <scope>IDENTIFICATION BY MASS SPECTROMETRY</scope>
    <scope>BIOPHYSICOCHEMICAL PROPERTIES</scope>
    <scope>SUBCELLULAR LOCATION</scope>
    <scope>PHOSPHORYLATION</scope>
    <scope>CATALYTIC ACTIVITY</scope>
    <scope>FUNCTION</scope>
</reference>
<reference key="6">
    <citation type="journal article" date="2009" name="Drug Metab. Dispos.">
        <title>24-hydroxycholesterol sulfation by human cytosolic sulfotransferases: formation of monosulfates and disulfates, molecular modeling, sulfatase sensitivity, and inhibition of liver x receptor activation.</title>
        <authorList>
            <person name="Cook I.T."/>
            <person name="Duniec-Dmuchowski Z."/>
            <person name="Kocarek T.A."/>
            <person name="Runge-Morris M."/>
            <person name="Falany C.N."/>
        </authorList>
    </citation>
    <scope>CATALYTIC ACTIVITY</scope>
    <scope>FUNCTION</scope>
    <scope>BIOPHYSICOCHEMICAL PROPERTIES</scope>
</reference>
<reference key="7">
    <citation type="journal article" date="2011" name="J. Steroid Biochem. Mol. Biol.">
        <title>Site-directed mutagenesis of human cytosolic sulfotransferase (SULT) 2B1b to phospho-mimetic Ser348Asp results in an isoform with increased catalytic activity.</title>
        <authorList>
            <person name="Salman E.D."/>
            <person name="He D."/>
            <person name="Runge-Morris M."/>
            <person name="Kocarek T.A."/>
            <person name="Falany C.N."/>
        </authorList>
    </citation>
    <scope>BIOPHYSICOCHEMICAL PROPERTIES</scope>
    <scope>SUBCELLULAR LOCATION</scope>
    <scope>PHOSPHORYLATION AT SER-348</scope>
    <scope>MUTAGENESIS OF SER-347; SER-348; SER-352 AND SER-357</scope>
    <scope>CATALYTIC ACTIVITY</scope>
    <scope>FUNCTION</scope>
</reference>
<reference key="8">
    <citation type="journal article" date="2003" name="J. Biol. Chem.">
        <title>Crystal structure of human cholesterol sulfotransferase (SULT2B1b) in the presence of pregnenolone and 3'-phosphoadenosine 5'-phosphate. Rationale for specificity differences between prototypical SULT2A1 and the SULT2BG1 isoforms.</title>
        <authorList>
            <person name="Lee K.A."/>
            <person name="Fuda H."/>
            <person name="Lee Y.C."/>
            <person name="Negishi M."/>
            <person name="Strott C.A."/>
            <person name="Pedersen L.C."/>
        </authorList>
    </citation>
    <scope>X-RAY CRYSTALLOGRAPHY (2.3 ANGSTROMS) OF 19-312 IN COMPLEX WITH ADENOSINE-3'-5'-DIPHOSPHATE (PAP) AND PREGNENOLONE</scope>
    <scope>CATALYTIC ACTIVITY</scope>
    <scope>FUNCTION</scope>
</reference>
<reference key="9">
    <citation type="journal article" date="2017" name="Am. J. Hum. Genet.">
        <title>Mutations in SULT2B1 cause autosomal-recessive congenital ichthyosis in humans.</title>
        <authorList>
            <person name="Heinz L."/>
            <person name="Kim G.J."/>
            <person name="Marrakchi S."/>
            <person name="Christiansen J."/>
            <person name="Turki H."/>
            <person name="Rauschendorf M.A."/>
            <person name="Lathrop M."/>
            <person name="Hausser I."/>
            <person name="Zimmer A.D."/>
            <person name="Fischer J."/>
        </authorList>
    </citation>
    <scope>VARIANTS ARCI14 LEU-149 AND GLN-274</scope>
    <scope>FUNCTION</scope>
    <scope>SUBCELLULAR LOCATION</scope>
    <scope>TISSUE SPECIFICITY</scope>
</reference>
<protein>
    <recommendedName>
        <fullName>Sulfotransferase 2B1</fullName>
        <ecNumber evidence="3 4 5 6 7 9">2.8.2.2</ecNumber>
    </recommendedName>
    <alternativeName>
        <fullName>Alcohol sulfotransferase</fullName>
    </alternativeName>
    <alternativeName>
        <fullName>Hydroxysteroid sulfotransferase 2</fullName>
    </alternativeName>
    <alternativeName>
        <fullName>Sulfotransferase family 2B member 1</fullName>
    </alternativeName>
    <alternativeName>
        <fullName>Sulfotransferase family cytosolic 2B member 1</fullName>
        <shortName>ST2B1</shortName>
    </alternativeName>
</protein>
<sequence>MDGPAEPQIPGLWDTYEDDISEISQKLPGEYFRYKGVPFPVGLYSLESISLAENTQDVRDDDIFIITYPKSGTTWMIEIICLILKEGDPSWIRSVPIWERAPWCETIVGAFSLPDQYSPRLMSSHLPIQIFTKAFFSSKAKVIYMGRNPRDVVVSLYHYSKIAGQLKDPGTPDQFLRDFLKGEVQFGSWFDHIKGWLRMKGKDNFLFITYEELQQDLQGSVERICGFLGRPLGKEALGSVVAHSTFSAMKANTMSNYTLLPPSLLDHRRGAFLRKGVCGDWKNHFTVAQSEAFDRAYRKQMRGMPTFPWDEDPEEDGSPDPEPSPEPEPKPSLEPNTSLEREPRPNSSPSPSPGQASETPHPRPS</sequence>
<name>ST2B1_HUMAN</name>
<proteinExistence type="evidence at protein level"/>
<accession>O00204</accession>
<accession>O00205</accession>
<accession>O75814</accession>
<feature type="chain" id="PRO_0000085149" description="Sulfotransferase 2B1">
    <location>
        <begin position="1"/>
        <end position="365"/>
    </location>
</feature>
<feature type="region of interest" description="Disordered" evidence="2">
    <location>
        <begin position="303"/>
        <end position="365"/>
    </location>
</feature>
<feature type="compositionally biased region" description="Acidic residues" evidence="2">
    <location>
        <begin position="309"/>
        <end position="325"/>
    </location>
</feature>
<feature type="active site" description="Proton acceptor" evidence="1">
    <location>
        <position position="125"/>
    </location>
</feature>
<feature type="binding site" evidence="1">
    <location>
        <begin position="70"/>
        <end position="75"/>
    </location>
    <ligand>
        <name>3'-phosphoadenylyl sulfate</name>
        <dbReference type="ChEBI" id="CHEBI:58339"/>
    </ligand>
</feature>
<feature type="binding site">
    <location>
        <position position="98"/>
    </location>
    <ligand>
        <name>substrate</name>
    </ligand>
</feature>
<feature type="binding site">
    <location>
        <position position="103"/>
    </location>
    <ligand>
        <name>substrate</name>
    </ligand>
</feature>
<feature type="binding site">
    <location>
        <position position="125"/>
    </location>
    <ligand>
        <name>substrate</name>
    </ligand>
</feature>
<feature type="binding site" evidence="1">
    <location>
        <position position="147"/>
    </location>
    <ligand>
        <name>3'-phosphoadenylyl sulfate</name>
        <dbReference type="ChEBI" id="CHEBI:58339"/>
    </ligand>
</feature>
<feature type="binding site" evidence="1">
    <location>
        <position position="155"/>
    </location>
    <ligand>
        <name>3'-phosphoadenylyl sulfate</name>
        <dbReference type="ChEBI" id="CHEBI:58339"/>
    </ligand>
</feature>
<feature type="binding site" evidence="1">
    <location>
        <position position="210"/>
    </location>
    <ligand>
        <name>3'-phosphoadenylyl sulfate</name>
        <dbReference type="ChEBI" id="CHEBI:58339"/>
    </ligand>
</feature>
<feature type="binding site" evidence="1">
    <location>
        <begin position="244"/>
        <end position="249"/>
    </location>
    <ligand>
        <name>3'-phosphoadenylyl sulfate</name>
        <dbReference type="ChEBI" id="CHEBI:58339"/>
    </ligand>
</feature>
<feature type="binding site" evidence="1">
    <location>
        <begin position="274"/>
        <end position="276"/>
    </location>
    <ligand>
        <name>3'-phosphoadenylyl sulfate</name>
        <dbReference type="ChEBI" id="CHEBI:58339"/>
    </ligand>
</feature>
<feature type="modified residue" description="Phosphoserine" evidence="7">
    <location>
        <position position="348"/>
    </location>
</feature>
<feature type="splice variant" id="VSP_012510" description="In isoform 2." evidence="10">
    <original>MDGPAEPQIPGLWDTYEDDISEI</original>
    <variation>MASPPPFH</variation>
    <location>
        <begin position="1"/>
        <end position="23"/>
    </location>
</feature>
<feature type="sequence variant" id="VAR_020887" description="In dbSNP:rs16982149.">
    <original>L</original>
    <variation>S</variation>
    <location>
        <position position="51"/>
    </location>
</feature>
<feature type="sequence variant" id="VAR_079210" description="In ARCI14; uncertain significance; dbSNP:rs1114167424." evidence="8">
    <original>P</original>
    <variation>L</variation>
    <location>
        <position position="149"/>
    </location>
</feature>
<feature type="sequence variant" id="VAR_021988" description="In dbSNP:rs2302947.">
    <original>V</original>
    <variation>I</variation>
    <location>
        <position position="240"/>
    </location>
</feature>
<feature type="sequence variant" id="VAR_079211" description="In ARCI14; uncertain significance; dbSNP:rs762765702." evidence="8">
    <original>R</original>
    <variation>Q</variation>
    <location>
        <position position="274"/>
    </location>
</feature>
<feature type="sequence variant" id="VAR_020888" description="In dbSNP:rs17842463.">
    <original>P</original>
    <variation>L</variation>
    <location>
        <position position="345"/>
    </location>
</feature>
<feature type="mutagenesis site" description="Loss of the cholesterol sulfotransferase activity." evidence="3">
    <location>
        <begin position="1"/>
        <end position="23"/>
    </location>
</feature>
<feature type="mutagenesis site" description="Increases the cholesterol sulfotransferase activity." evidence="3">
    <location>
        <begin position="1"/>
        <end position="18"/>
    </location>
</feature>
<feature type="mutagenesis site" description="Increases the cholesterol sulfotransferase activity." evidence="3">
    <original>D</original>
    <variation>A</variation>
    <location>
        <position position="19"/>
    </location>
</feature>
<feature type="mutagenesis site" description="Loss of the cholesterol sulfotransferase activity." evidence="3">
    <original>I</original>
    <variation>A</variation>
    <location>
        <position position="20"/>
    </location>
</feature>
<feature type="mutagenesis site" description="Increases the cholesterol sulfotransferase activity." evidence="3">
    <original>S</original>
    <variation>A</variation>
    <location>
        <position position="21"/>
    </location>
</feature>
<feature type="mutagenesis site" description="Increases the cholesterol sulfotransferase activity." evidence="3">
    <original>E</original>
    <variation>A</variation>
    <location>
        <position position="22"/>
    </location>
</feature>
<feature type="mutagenesis site" description="Loss of the cholesterol sulfotransferase activity." evidence="3">
    <original>I</original>
    <variation>A</variation>
    <location>
        <position position="23"/>
    </location>
</feature>
<feature type="mutagenesis site" description="No change in subcellular localization." evidence="7">
    <original>S</original>
    <variation>A</variation>
    <location>
        <position position="347"/>
    </location>
</feature>
<feature type="mutagenesis site" description="10-fold increase in specific activity for DHEA sulfation. 10-fold increase in substrate affinity for DHEA and pregnenolone. No effect on substrate affinity for PAPS. Increases enzyme stability." evidence="7">
    <original>S</original>
    <variation>D</variation>
    <location>
        <position position="348"/>
    </location>
</feature>
<feature type="mutagenesis site" description="Abolishes nuclear localization." evidence="7">
    <original>S</original>
    <variation>G</variation>
    <location>
        <position position="348"/>
    </location>
</feature>
<feature type="mutagenesis site" description="No change in subcellular localization." evidence="7">
    <original>S</original>
    <variation>G</variation>
    <location>
        <position position="352"/>
    </location>
</feature>
<feature type="mutagenesis site" description="No change in subcellular localization." evidence="7">
    <original>S</original>
    <variation>G</variation>
    <location>
        <position position="357"/>
    </location>
</feature>
<feature type="sequence conflict" description="In Ref. 1; AAC78498." evidence="11" ref="1">
    <original>S</original>
    <variation>N</variation>
    <location>
        <position position="350"/>
    </location>
</feature>
<feature type="helix" evidence="13">
    <location>
        <begin position="19"/>
        <end position="25"/>
    </location>
</feature>
<feature type="strand" evidence="13">
    <location>
        <begin position="31"/>
        <end position="34"/>
    </location>
</feature>
<feature type="strand" evidence="13">
    <location>
        <begin position="37"/>
        <end position="41"/>
    </location>
</feature>
<feature type="helix" evidence="13">
    <location>
        <begin position="46"/>
        <end position="54"/>
    </location>
</feature>
<feature type="strand" evidence="13">
    <location>
        <begin position="63"/>
        <end position="68"/>
    </location>
</feature>
<feature type="helix" evidence="13">
    <location>
        <begin position="73"/>
        <end position="84"/>
    </location>
</feature>
<feature type="turn" evidence="13">
    <location>
        <begin position="85"/>
        <end position="87"/>
    </location>
</feature>
<feature type="helix" evidence="13">
    <location>
        <begin position="90"/>
        <end position="94"/>
    </location>
</feature>
<feature type="helix" evidence="13">
    <location>
        <begin position="97"/>
        <end position="100"/>
    </location>
</feature>
<feature type="strand" evidence="13">
    <location>
        <begin position="103"/>
        <end position="106"/>
    </location>
</feature>
<feature type="helix" evidence="13">
    <location>
        <begin position="110"/>
        <end position="112"/>
    </location>
</feature>
<feature type="strand" evidence="13">
    <location>
        <begin position="121"/>
        <end position="124"/>
    </location>
</feature>
<feature type="turn" evidence="13">
    <location>
        <begin position="128"/>
        <end position="130"/>
    </location>
</feature>
<feature type="helix" evidence="13">
    <location>
        <begin position="133"/>
        <end position="135"/>
    </location>
</feature>
<feature type="strand" evidence="13">
    <location>
        <begin position="141"/>
        <end position="146"/>
    </location>
</feature>
<feature type="helix" evidence="13">
    <location>
        <begin position="149"/>
        <end position="162"/>
    </location>
</feature>
<feature type="strand" evidence="12">
    <location>
        <begin position="163"/>
        <end position="166"/>
    </location>
</feature>
<feature type="helix" evidence="13">
    <location>
        <begin position="172"/>
        <end position="180"/>
    </location>
</feature>
<feature type="helix" evidence="13">
    <location>
        <begin position="189"/>
        <end position="196"/>
    </location>
</feature>
<feature type="helix" evidence="13">
    <location>
        <begin position="197"/>
        <end position="199"/>
    </location>
</feature>
<feature type="strand" evidence="13">
    <location>
        <begin position="205"/>
        <end position="209"/>
    </location>
</feature>
<feature type="helix" evidence="13">
    <location>
        <begin position="210"/>
        <end position="215"/>
    </location>
</feature>
<feature type="helix" evidence="13">
    <location>
        <begin position="217"/>
        <end position="228"/>
    </location>
</feature>
<feature type="helix" evidence="13">
    <location>
        <begin position="234"/>
        <end position="244"/>
    </location>
</feature>
<feature type="helix" evidence="13">
    <location>
        <begin position="246"/>
        <end position="250"/>
    </location>
</feature>
<feature type="turn" evidence="13">
    <location>
        <begin position="253"/>
        <end position="255"/>
    </location>
</feature>
<feature type="turn" evidence="12">
    <location>
        <begin position="256"/>
        <end position="259"/>
    </location>
</feature>
<feature type="turn" evidence="13">
    <location>
        <begin position="262"/>
        <end position="264"/>
    </location>
</feature>
<feature type="turn" evidence="13">
    <location>
        <begin position="267"/>
        <end position="269"/>
    </location>
</feature>
<feature type="helix" evidence="13">
    <location>
        <begin position="280"/>
        <end position="283"/>
    </location>
</feature>
<feature type="helix" evidence="13">
    <location>
        <begin position="287"/>
        <end position="300"/>
    </location>
</feature>
<feature type="turn" evidence="13">
    <location>
        <begin position="301"/>
        <end position="303"/>
    </location>
</feature>
<keyword id="KW-0002">3D-structure</keyword>
<keyword id="KW-0025">Alternative splicing</keyword>
<keyword id="KW-0963">Cytoplasm</keyword>
<keyword id="KW-0225">Disease variant</keyword>
<keyword id="KW-0256">Endoplasmic reticulum</keyword>
<keyword id="KW-0977">Ichthyosis</keyword>
<keyword id="KW-0443">Lipid metabolism</keyword>
<keyword id="KW-0492">Microsome</keyword>
<keyword id="KW-0539">Nucleus</keyword>
<keyword id="KW-0597">Phosphoprotein</keyword>
<keyword id="KW-1267">Proteomics identification</keyword>
<keyword id="KW-1185">Reference proteome</keyword>
<keyword id="KW-0753">Steroid metabolism</keyword>
<keyword id="KW-0808">Transferase</keyword>
<evidence type="ECO:0000250" key="1">
    <source>
        <dbReference type="UniProtKB" id="P49891"/>
    </source>
</evidence>
<evidence type="ECO:0000256" key="2">
    <source>
        <dbReference type="SAM" id="MobiDB-lite"/>
    </source>
</evidence>
<evidence type="ECO:0000269" key="3">
    <source>
    </source>
</evidence>
<evidence type="ECO:0000269" key="4">
    <source>
    </source>
</evidence>
<evidence type="ECO:0000269" key="5">
    <source>
    </source>
</evidence>
<evidence type="ECO:0000269" key="6">
    <source>
    </source>
</evidence>
<evidence type="ECO:0000269" key="7">
    <source>
    </source>
</evidence>
<evidence type="ECO:0000269" key="8">
    <source>
    </source>
</evidence>
<evidence type="ECO:0000269" key="9">
    <source>
    </source>
</evidence>
<evidence type="ECO:0000303" key="10">
    <source>
    </source>
</evidence>
<evidence type="ECO:0000305" key="11"/>
<evidence type="ECO:0007829" key="12">
    <source>
        <dbReference type="PDB" id="1Q1Z"/>
    </source>
</evidence>
<evidence type="ECO:0007829" key="13">
    <source>
        <dbReference type="PDB" id="1Q20"/>
    </source>
</evidence>
<dbReference type="EC" id="2.8.2.2" evidence="3 4 5 6 7 9"/>
<dbReference type="EMBL" id="U92314">
    <property type="protein sequence ID" value="AAC78498.1"/>
    <property type="molecule type" value="mRNA"/>
</dbReference>
<dbReference type="EMBL" id="U92315">
    <property type="protein sequence ID" value="AAC78499.1"/>
    <property type="molecule type" value="mRNA"/>
</dbReference>
<dbReference type="EMBL" id="U92322">
    <property type="protein sequence ID" value="AAC78553.1"/>
    <property type="molecule type" value="Genomic_DNA"/>
</dbReference>
<dbReference type="EMBL" id="U92316">
    <property type="protein sequence ID" value="AAC78553.1"/>
    <property type="status" value="JOINED"/>
    <property type="molecule type" value="Genomic_DNA"/>
</dbReference>
<dbReference type="EMBL" id="U92318">
    <property type="protein sequence ID" value="AAC78553.1"/>
    <property type="status" value="JOINED"/>
    <property type="molecule type" value="Genomic_DNA"/>
</dbReference>
<dbReference type="EMBL" id="U92319">
    <property type="protein sequence ID" value="AAC78553.1"/>
    <property type="status" value="JOINED"/>
    <property type="molecule type" value="Genomic_DNA"/>
</dbReference>
<dbReference type="EMBL" id="U92320">
    <property type="protein sequence ID" value="AAC78553.1"/>
    <property type="status" value="JOINED"/>
    <property type="molecule type" value="Genomic_DNA"/>
</dbReference>
<dbReference type="EMBL" id="U92321">
    <property type="protein sequence ID" value="AAC78553.1"/>
    <property type="status" value="JOINED"/>
    <property type="molecule type" value="Genomic_DNA"/>
</dbReference>
<dbReference type="EMBL" id="U92322">
    <property type="protein sequence ID" value="AAC78554.1"/>
    <property type="molecule type" value="Genomic_DNA"/>
</dbReference>
<dbReference type="EMBL" id="U92316">
    <property type="protein sequence ID" value="AAC78554.1"/>
    <property type="status" value="JOINED"/>
    <property type="molecule type" value="Genomic_DNA"/>
</dbReference>
<dbReference type="EMBL" id="U92317">
    <property type="protein sequence ID" value="AAC78554.1"/>
    <property type="status" value="JOINED"/>
    <property type="molecule type" value="Genomic_DNA"/>
</dbReference>
<dbReference type="EMBL" id="U92318">
    <property type="protein sequence ID" value="AAC78554.1"/>
    <property type="status" value="JOINED"/>
    <property type="molecule type" value="Genomic_DNA"/>
</dbReference>
<dbReference type="EMBL" id="U92319">
    <property type="protein sequence ID" value="AAC78554.1"/>
    <property type="status" value="JOINED"/>
    <property type="molecule type" value="Genomic_DNA"/>
</dbReference>
<dbReference type="EMBL" id="U92320">
    <property type="protein sequence ID" value="AAC78554.1"/>
    <property type="status" value="JOINED"/>
    <property type="molecule type" value="Genomic_DNA"/>
</dbReference>
<dbReference type="EMBL" id="U92321">
    <property type="protein sequence ID" value="AAC78554.1"/>
    <property type="status" value="JOINED"/>
    <property type="molecule type" value="Genomic_DNA"/>
</dbReference>
<dbReference type="EMBL" id="AC008403">
    <property type="status" value="NOT_ANNOTATED_CDS"/>
    <property type="molecule type" value="Genomic_DNA"/>
</dbReference>
<dbReference type="EMBL" id="BC034694">
    <property type="protein sequence ID" value="AAH34694.1"/>
    <property type="molecule type" value="mRNA"/>
</dbReference>
<dbReference type="CCDS" id="CCDS12723.1">
    <molecule id="O00204-1"/>
</dbReference>
<dbReference type="CCDS" id="CCDS12724.1">
    <molecule id="O00204-2"/>
</dbReference>
<dbReference type="RefSeq" id="NP_004596.2">
    <molecule id="O00204-2"/>
    <property type="nucleotide sequence ID" value="NM_004605.2"/>
</dbReference>
<dbReference type="RefSeq" id="NP_814444.1">
    <molecule id="O00204-1"/>
    <property type="nucleotide sequence ID" value="NM_177973.2"/>
</dbReference>
<dbReference type="PDB" id="1Q1Q">
    <property type="method" value="X-ray"/>
    <property type="resolution" value="2.91 A"/>
    <property type="chains" value="A=24-365"/>
</dbReference>
<dbReference type="PDB" id="1Q1Z">
    <property type="method" value="X-ray"/>
    <property type="resolution" value="2.40 A"/>
    <property type="chains" value="A=19-312"/>
</dbReference>
<dbReference type="PDB" id="1Q20">
    <property type="method" value="X-ray"/>
    <property type="resolution" value="2.30 A"/>
    <property type="chains" value="A=19-312"/>
</dbReference>
<dbReference type="PDB" id="1Q22">
    <property type="method" value="X-ray"/>
    <property type="resolution" value="2.50 A"/>
    <property type="chains" value="A=19-312"/>
</dbReference>
<dbReference type="PDBsum" id="1Q1Q"/>
<dbReference type="PDBsum" id="1Q1Z"/>
<dbReference type="PDBsum" id="1Q20"/>
<dbReference type="PDBsum" id="1Q22"/>
<dbReference type="SMR" id="O00204"/>
<dbReference type="BioGRID" id="112689">
    <property type="interactions" value="83"/>
</dbReference>
<dbReference type="FunCoup" id="O00204">
    <property type="interactions" value="1051"/>
</dbReference>
<dbReference type="IntAct" id="O00204">
    <property type="interactions" value="52"/>
</dbReference>
<dbReference type="STRING" id="9606.ENSP00000201586"/>
<dbReference type="ChEMBL" id="CHEMBL1743297"/>
<dbReference type="DrugBank" id="DB01812">
    <property type="generic name" value="Adenosine 3',5'-diphosphate"/>
</dbReference>
<dbReference type="DrugBank" id="DB03309">
    <property type="generic name" value="N-cyclohexyltaurine"/>
</dbReference>
<dbReference type="DrugBank" id="DB01708">
    <property type="generic name" value="Prasterone"/>
</dbReference>
<dbReference type="DrugBank" id="DB02789">
    <property type="generic name" value="Pregnenolone"/>
</dbReference>
<dbReference type="SwissLipids" id="SLP:000001653">
    <molecule id="O00204-1"/>
</dbReference>
<dbReference type="SwissLipids" id="SLP:000001654">
    <molecule id="O00204-2"/>
</dbReference>
<dbReference type="MoonDB" id="O00204">
    <property type="type" value="Predicted"/>
</dbReference>
<dbReference type="iPTMnet" id="O00204"/>
<dbReference type="PhosphoSitePlus" id="O00204"/>
<dbReference type="BioMuta" id="SULT2B1"/>
<dbReference type="jPOST" id="O00204"/>
<dbReference type="MassIVE" id="O00204"/>
<dbReference type="PaxDb" id="9606-ENSP00000201586"/>
<dbReference type="PeptideAtlas" id="O00204"/>
<dbReference type="PRIDE" id="O00204"/>
<dbReference type="ProteomicsDB" id="47777">
    <molecule id="O00204-1"/>
</dbReference>
<dbReference type="ProteomicsDB" id="47778">
    <molecule id="O00204-2"/>
</dbReference>
<dbReference type="Antibodypedia" id="31732">
    <property type="antibodies" value="262 antibodies from 28 providers"/>
</dbReference>
<dbReference type="DNASU" id="6820"/>
<dbReference type="Ensembl" id="ENST00000201586.7">
    <molecule id="O00204-1"/>
    <property type="protein sequence ID" value="ENSP00000201586.2"/>
    <property type="gene ID" value="ENSG00000088002.12"/>
</dbReference>
<dbReference type="Ensembl" id="ENST00000323090.4">
    <molecule id="O00204-2"/>
    <property type="protein sequence ID" value="ENSP00000312880.3"/>
    <property type="gene ID" value="ENSG00000088002.12"/>
</dbReference>
<dbReference type="GeneID" id="6820"/>
<dbReference type="KEGG" id="hsa:6820"/>
<dbReference type="MANE-Select" id="ENST00000201586.7">
    <property type="protein sequence ID" value="ENSP00000201586.2"/>
    <property type="RefSeq nucleotide sequence ID" value="NM_177973.2"/>
    <property type="RefSeq protein sequence ID" value="NP_814444.1"/>
</dbReference>
<dbReference type="UCSC" id="uc002pjl.4">
    <molecule id="O00204-1"/>
    <property type="organism name" value="human"/>
</dbReference>
<dbReference type="AGR" id="HGNC:11459"/>
<dbReference type="CTD" id="6820"/>
<dbReference type="DisGeNET" id="6820"/>
<dbReference type="GeneCards" id="SULT2B1"/>
<dbReference type="HGNC" id="HGNC:11459">
    <property type="gene designation" value="SULT2B1"/>
</dbReference>
<dbReference type="HPA" id="ENSG00000088002">
    <property type="expression patterns" value="Tissue enhanced (esophagus, skin, vagina)"/>
</dbReference>
<dbReference type="MalaCards" id="SULT2B1"/>
<dbReference type="MIM" id="604125">
    <property type="type" value="gene"/>
</dbReference>
<dbReference type="MIM" id="617571">
    <property type="type" value="phenotype"/>
</dbReference>
<dbReference type="neXtProt" id="NX_O00204"/>
<dbReference type="OpenTargets" id="ENSG00000088002"/>
<dbReference type="Orphanet" id="79394">
    <property type="disease" value="Congenital ichthyosiform erythroderma"/>
</dbReference>
<dbReference type="Orphanet" id="313">
    <property type="disease" value="Lamellar ichthyosis"/>
</dbReference>
<dbReference type="PharmGKB" id="PA36249"/>
<dbReference type="VEuPathDB" id="HostDB:ENSG00000088002"/>
<dbReference type="eggNOG" id="KOG1584">
    <property type="taxonomic scope" value="Eukaryota"/>
</dbReference>
<dbReference type="GeneTree" id="ENSGT00940000159269"/>
<dbReference type="HOGENOM" id="CLU_027239_1_0_1"/>
<dbReference type="InParanoid" id="O00204"/>
<dbReference type="OMA" id="DPYEKNI"/>
<dbReference type="OrthoDB" id="205623at2759"/>
<dbReference type="PAN-GO" id="O00204">
    <property type="GO annotations" value="3 GO annotations based on evolutionary models"/>
</dbReference>
<dbReference type="PhylomeDB" id="O00204"/>
<dbReference type="TreeFam" id="TF321745"/>
<dbReference type="BioCyc" id="MetaCyc:HS01587-MONOMER"/>
<dbReference type="PathwayCommons" id="O00204"/>
<dbReference type="Reactome" id="R-HSA-156584">
    <property type="pathway name" value="Cytosolic sulfonation of small molecules"/>
</dbReference>
<dbReference type="SABIO-RK" id="O00204"/>
<dbReference type="SignaLink" id="O00204"/>
<dbReference type="BioGRID-ORCS" id="6820">
    <property type="hits" value="15 hits in 1151 CRISPR screens"/>
</dbReference>
<dbReference type="ChiTaRS" id="SULT2B1">
    <property type="organism name" value="human"/>
</dbReference>
<dbReference type="EvolutionaryTrace" id="O00204"/>
<dbReference type="GeneWiki" id="SULT2B1"/>
<dbReference type="GenomeRNAi" id="6820"/>
<dbReference type="Pharos" id="O00204">
    <property type="development level" value="Tbio"/>
</dbReference>
<dbReference type="PRO" id="PR:O00204"/>
<dbReference type="Proteomes" id="UP000005640">
    <property type="component" value="Chromosome 19"/>
</dbReference>
<dbReference type="RNAct" id="O00204">
    <property type="molecule type" value="protein"/>
</dbReference>
<dbReference type="Bgee" id="ENSG00000088002">
    <property type="expression patterns" value="Expressed in lower esophagus mucosa and 147 other cell types or tissues"/>
</dbReference>
<dbReference type="GO" id="GO:0005737">
    <property type="term" value="C:cytoplasm"/>
    <property type="evidence" value="ECO:0000318"/>
    <property type="project" value="GO_Central"/>
</dbReference>
<dbReference type="GO" id="GO:0005829">
    <property type="term" value="C:cytosol"/>
    <property type="evidence" value="ECO:0000314"/>
    <property type="project" value="HPA"/>
</dbReference>
<dbReference type="GO" id="GO:0005783">
    <property type="term" value="C:endoplasmic reticulum"/>
    <property type="evidence" value="ECO:0007669"/>
    <property type="project" value="UniProtKB-KW"/>
</dbReference>
<dbReference type="GO" id="GO:0070062">
    <property type="term" value="C:extracellular exosome"/>
    <property type="evidence" value="ECO:0007005"/>
    <property type="project" value="UniProtKB"/>
</dbReference>
<dbReference type="GO" id="GO:0043231">
    <property type="term" value="C:intracellular membrane-bounded organelle"/>
    <property type="evidence" value="ECO:0000314"/>
    <property type="project" value="HPA"/>
</dbReference>
<dbReference type="GO" id="GO:0005634">
    <property type="term" value="C:nucleus"/>
    <property type="evidence" value="ECO:0007669"/>
    <property type="project" value="UniProtKB-SubCell"/>
</dbReference>
<dbReference type="GO" id="GO:0015485">
    <property type="term" value="F:cholesterol binding"/>
    <property type="evidence" value="ECO:0000314"/>
    <property type="project" value="CAFA"/>
</dbReference>
<dbReference type="GO" id="GO:0051922">
    <property type="term" value="F:cholesterol sulfotransferase activity"/>
    <property type="evidence" value="ECO:0007669"/>
    <property type="project" value="RHEA"/>
</dbReference>
<dbReference type="GO" id="GO:0003676">
    <property type="term" value="F:nucleic acid binding"/>
    <property type="evidence" value="ECO:0000315"/>
    <property type="project" value="CAFA"/>
</dbReference>
<dbReference type="GO" id="GO:0036094">
    <property type="term" value="F:small molecule binding"/>
    <property type="evidence" value="ECO:0000269"/>
    <property type="project" value="DisProt"/>
</dbReference>
<dbReference type="GO" id="GO:1990239">
    <property type="term" value="F:steroid hormone binding"/>
    <property type="evidence" value="ECO:0000315"/>
    <property type="project" value="CAFA"/>
</dbReference>
<dbReference type="GO" id="GO:0050294">
    <property type="term" value="F:steroid sulfotransferase activity"/>
    <property type="evidence" value="ECO:0000314"/>
    <property type="project" value="UniProtKB"/>
</dbReference>
<dbReference type="GO" id="GO:0050427">
    <property type="term" value="P:3'-phosphoadenosine 5'-phosphosulfate metabolic process"/>
    <property type="evidence" value="ECO:0000314"/>
    <property type="project" value="CAFA"/>
</dbReference>
<dbReference type="GO" id="GO:0008203">
    <property type="term" value="P:cholesterol metabolic process"/>
    <property type="evidence" value="ECO:0000315"/>
    <property type="project" value="UniProtKB"/>
</dbReference>
<dbReference type="GO" id="GO:0008285">
    <property type="term" value="P:negative regulation of cell population proliferation"/>
    <property type="evidence" value="ECO:0000315"/>
    <property type="project" value="UniProtKB"/>
</dbReference>
<dbReference type="GO" id="GO:0045606">
    <property type="term" value="P:positive regulation of epidermal cell differentiation"/>
    <property type="evidence" value="ECO:0000315"/>
    <property type="project" value="UniProtKB"/>
</dbReference>
<dbReference type="GO" id="GO:0008202">
    <property type="term" value="P:steroid metabolic process"/>
    <property type="evidence" value="ECO:0000314"/>
    <property type="project" value="UniProtKB"/>
</dbReference>
<dbReference type="GO" id="GO:0051923">
    <property type="term" value="P:sulfation"/>
    <property type="evidence" value="ECO:0000318"/>
    <property type="project" value="GO_Central"/>
</dbReference>
<dbReference type="DisProt" id="DP00404"/>
<dbReference type="DisProt" id="DP01099">
    <molecule id="O00204-2"/>
</dbReference>
<dbReference type="FunFam" id="3.40.50.300:FF:000433">
    <property type="entry name" value="Estrogen sulfotransferase"/>
    <property type="match status" value="1"/>
</dbReference>
<dbReference type="Gene3D" id="3.40.50.300">
    <property type="entry name" value="P-loop containing nucleotide triphosphate hydrolases"/>
    <property type="match status" value="1"/>
</dbReference>
<dbReference type="InterPro" id="IPR027417">
    <property type="entry name" value="P-loop_NTPase"/>
</dbReference>
<dbReference type="InterPro" id="IPR000863">
    <property type="entry name" value="Sulfotransferase_dom"/>
</dbReference>
<dbReference type="PANTHER" id="PTHR11783">
    <property type="entry name" value="SULFOTRANSFERASE SULT"/>
    <property type="match status" value="1"/>
</dbReference>
<dbReference type="Pfam" id="PF00685">
    <property type="entry name" value="Sulfotransfer_1"/>
    <property type="match status" value="1"/>
</dbReference>
<dbReference type="SUPFAM" id="SSF52540">
    <property type="entry name" value="P-loop containing nucleoside triphosphate hydrolases"/>
    <property type="match status" value="1"/>
</dbReference>
<organism>
    <name type="scientific">Homo sapiens</name>
    <name type="common">Human</name>
    <dbReference type="NCBI Taxonomy" id="9606"/>
    <lineage>
        <taxon>Eukaryota</taxon>
        <taxon>Metazoa</taxon>
        <taxon>Chordata</taxon>
        <taxon>Craniata</taxon>
        <taxon>Vertebrata</taxon>
        <taxon>Euteleostomi</taxon>
        <taxon>Mammalia</taxon>
        <taxon>Eutheria</taxon>
        <taxon>Euarchontoglires</taxon>
        <taxon>Primates</taxon>
        <taxon>Haplorrhini</taxon>
        <taxon>Catarrhini</taxon>
        <taxon>Hominidae</taxon>
        <taxon>Homo</taxon>
    </lineage>
</organism>
<comment type="function">
    <text evidence="3 5 6 7 8 9">Sulfotransferase that utilizes 3'-phospho-5'-adenylyl sulfate (PAPS) as sulfonate donor to catalyze the sulfate conjugation. Responsible for the sulfation of cholesterol (PubMed:12145317, PubMed:19589875). Catalyzes sulfation of the 3beta-hydroxyl groups of steroids, such as, pregnenolone and dehydroepiandrosterone (DHEA) (PubMed:12145317, PubMed:16855051, PubMed:21855633, PubMed:9799594). Preferentially sulfonates cholesterol, while it also has significant activity with pregnenolone and DHEA (PubMed:12145317, PubMed:21855633). Plays a role in epidermal cholesterol metabolism and in the regulation of epidermal proliferation and differentiation (PubMed:28575648).</text>
</comment>
<comment type="function">
    <molecule>Isoform 2</molecule>
    <text evidence="3">Sulfonates pregnenolone but not cholesterol.</text>
</comment>
<comment type="catalytic activity">
    <reaction evidence="3 5 6 7 9">
        <text>an alcohol + 3'-phosphoadenylyl sulfate = an alkyl sulfate + adenosine 3',5'-bisphosphate + H(+)</text>
        <dbReference type="Rhea" id="RHEA:22552"/>
        <dbReference type="ChEBI" id="CHEBI:15378"/>
        <dbReference type="ChEBI" id="CHEBI:30879"/>
        <dbReference type="ChEBI" id="CHEBI:58339"/>
        <dbReference type="ChEBI" id="CHEBI:58343"/>
        <dbReference type="ChEBI" id="CHEBI:83414"/>
        <dbReference type="EC" id="2.8.2.2"/>
    </reaction>
</comment>
<comment type="catalytic activity">
    <reaction evidence="3 5 7 9">
        <text>3beta-hydroxyandrost-5-en-17-one + 3'-phosphoadenylyl sulfate = dehydroepiandrosterone 3-sulfate + adenosine 3',5'-bisphosphate + H(+)</text>
        <dbReference type="Rhea" id="RHEA:51216"/>
        <dbReference type="ChEBI" id="CHEBI:15378"/>
        <dbReference type="ChEBI" id="CHEBI:28689"/>
        <dbReference type="ChEBI" id="CHEBI:57905"/>
        <dbReference type="ChEBI" id="CHEBI:58339"/>
        <dbReference type="ChEBI" id="CHEBI:58343"/>
    </reaction>
    <physiologicalReaction direction="left-to-right" evidence="11">
        <dbReference type="Rhea" id="RHEA:51217"/>
    </physiologicalReaction>
</comment>
<comment type="catalytic activity">
    <reaction evidence="6">
        <text>(24S)-hydroxycholesterol + 3'-phosphoadenylyl sulfate = (24S)-hydroxycholesterol 3-sulfate + adenosine 3',5'-bisphosphate + H(+)</text>
        <dbReference type="Rhea" id="RHEA:52348"/>
        <dbReference type="ChEBI" id="CHEBI:15378"/>
        <dbReference type="ChEBI" id="CHEBI:34310"/>
        <dbReference type="ChEBI" id="CHEBI:58339"/>
        <dbReference type="ChEBI" id="CHEBI:58343"/>
        <dbReference type="ChEBI" id="CHEBI:136567"/>
    </reaction>
    <physiologicalReaction direction="left-to-right" evidence="11">
        <dbReference type="Rhea" id="RHEA:52349"/>
    </physiologicalReaction>
</comment>
<comment type="catalytic activity">
    <reaction evidence="3 4">
        <text>cholesterol + 3'-phosphoadenylyl sulfate = cholesterol sulfate + adenosine 3',5'-bisphosphate + H(+)</text>
        <dbReference type="Rhea" id="RHEA:52368"/>
        <dbReference type="ChEBI" id="CHEBI:15378"/>
        <dbReference type="ChEBI" id="CHEBI:16113"/>
        <dbReference type="ChEBI" id="CHEBI:58339"/>
        <dbReference type="ChEBI" id="CHEBI:58343"/>
        <dbReference type="ChEBI" id="CHEBI:136579"/>
    </reaction>
    <physiologicalReaction direction="left-to-right" evidence="11">
        <dbReference type="Rhea" id="RHEA:52369"/>
    </physiologicalReaction>
</comment>
<comment type="catalytic activity">
    <reaction evidence="3 4 7">
        <text>pregnenolone + 3'-phosphoadenylyl sulfate = pregnenolone sulfate + adenosine 3',5'-bisphosphate + H(+)</text>
        <dbReference type="Rhea" id="RHEA:52356"/>
        <dbReference type="ChEBI" id="CHEBI:15378"/>
        <dbReference type="ChEBI" id="CHEBI:16581"/>
        <dbReference type="ChEBI" id="CHEBI:58339"/>
        <dbReference type="ChEBI" id="CHEBI:58343"/>
        <dbReference type="ChEBI" id="CHEBI:133000"/>
    </reaction>
    <physiologicalReaction direction="left-to-right" evidence="11">
        <dbReference type="Rhea" id="RHEA:52357"/>
    </physiologicalReaction>
</comment>
<comment type="biophysicochemical properties">
    <kinetics>
        <KM evidence="6">23.5 uM for (24S)-hydroxycholesterol</KM>
        <KM evidence="7">10.9 uM for DHEA (at 37 degrees Celsius, in the presence of 1 mM MgCl2)</KM>
        <KM evidence="5">3.8 uM for DHEA (at 37 degrees Celsius, in the presence of 10 mM MgCl2)</KM>
        <KM evidence="7">11.8 uM for pregnenolone (at 37 degrees Celsius, in the presence of 1 mM MgCl2)</KM>
        <KM evidence="7">0.6 uM for PAPS (at 37 degrees Celsius, in the presence of 1 mM MgCl2)</KM>
        <Vmax evidence="5">1752.0 pmol/min/mg enzyme toward DHEA (at 37 degrees Celsius, in the presence of 10 mM MgCl2)</Vmax>
    </kinetics>
    <temperatureDependence>
        <text evidence="5 7">Optimum temperature is 37 degrees Celsius. Retains 70% and 20% of activity when incubated at 42 degrees Celsius for 45 and 120 minutes, respectively. Activity is lost after 200 minutes incubation at 42 degrees Celsius.</text>
    </temperatureDependence>
</comment>
<comment type="interaction">
    <interactant intactId="EBI-749441">
        <id>O00204</id>
    </interactant>
    <interactant intactId="EBI-10198377">
        <id>P14621</id>
        <label>ACYP2</label>
    </interactant>
    <organismsDiffer>false</organismsDiffer>
    <experiments>3</experiments>
</comment>
<comment type="interaction">
    <interactant intactId="EBI-749441">
        <id>O00204</id>
    </interactant>
    <interactant intactId="EBI-742054">
        <id>Q96D03</id>
        <label>DDIT4L</label>
    </interactant>
    <organismsDiffer>false</organismsDiffer>
    <experiments>3</experiments>
</comment>
<comment type="interaction">
    <interactant intactId="EBI-749441">
        <id>O00204</id>
    </interactant>
    <interactant intactId="EBI-750451">
        <id>Q96Q35</id>
        <label>FLACC1</label>
    </interactant>
    <organismsDiffer>false</organismsDiffer>
    <experiments>8</experiments>
</comment>
<comment type="interaction">
    <interactant intactId="EBI-749441">
        <id>O00204</id>
    </interactant>
    <interactant intactId="EBI-11533409">
        <id>Q96Q35-2</id>
        <label>FLACC1</label>
    </interactant>
    <organismsDiffer>false</organismsDiffer>
    <experiments>8</experiments>
</comment>
<comment type="interaction">
    <interactant intactId="EBI-749441">
        <id>O00204</id>
    </interactant>
    <interactant intactId="EBI-11959635">
        <id>Q9P2G9-2</id>
        <label>KLHL8</label>
    </interactant>
    <organismsDiffer>false</organismsDiffer>
    <experiments>3</experiments>
</comment>
<comment type="interaction">
    <interactant intactId="EBI-749441">
        <id>O00204</id>
    </interactant>
    <interactant intactId="EBI-1751761">
        <id>O43900</id>
        <label>PRICKLE3</label>
    </interactant>
    <organismsDiffer>false</organismsDiffer>
    <experiments>3</experiments>
</comment>
<comment type="interaction">
    <interactant intactId="EBI-749441">
        <id>O00204</id>
    </interactant>
    <interactant intactId="EBI-10829018">
        <id>Q04864-2</id>
        <label>REL</label>
    </interactant>
    <organismsDiffer>false</organismsDiffer>
    <experiments>3</experiments>
</comment>
<comment type="interaction">
    <interactant intactId="EBI-749441">
        <id>O00204</id>
    </interactant>
    <interactant intactId="EBI-1058850">
        <id>O76094</id>
        <label>SRP72</label>
    </interactant>
    <organismsDiffer>false</organismsDiffer>
    <experiments>3</experiments>
</comment>
<comment type="interaction">
    <interactant intactId="EBI-749441">
        <id>O00204</id>
    </interactant>
    <interactant intactId="EBI-2814403">
        <id>P50225</id>
        <label>SULT1A1</label>
    </interactant>
    <organismsDiffer>false</organismsDiffer>
    <experiments>8</experiments>
</comment>
<comment type="interaction">
    <interactant intactId="EBI-749441">
        <id>O00204</id>
    </interactant>
    <interactant intactId="EBI-10179062">
        <id>O43704</id>
        <label>SULT1B1</label>
    </interactant>
    <organismsDiffer>false</organismsDiffer>
    <experiments>9</experiments>
</comment>
<comment type="interaction">
    <interactant intactId="EBI-749441">
        <id>O00204</id>
    </interactant>
    <interactant intactId="EBI-12837366">
        <id>Q6IMI6</id>
        <label>SULT1C3</label>
    </interactant>
    <organismsDiffer>false</organismsDiffer>
    <experiments>3</experiments>
</comment>
<comment type="interaction">
    <interactant intactId="EBI-749441">
        <id>O00204</id>
    </interactant>
    <interactant intactId="EBI-10486136">
        <id>Q6ZNH5</id>
        <label>ZNF497</label>
    </interactant>
    <organismsDiffer>false</organismsDiffer>
    <experiments>3</experiments>
</comment>
<comment type="subcellular location">
    <subcellularLocation>
        <location evidence="4 5 7 8">Cytoplasm</location>
        <location evidence="4 5 7 8">Cytosol</location>
    </subcellularLocation>
    <subcellularLocation>
        <location evidence="5 7">Microsome</location>
    </subcellularLocation>
    <subcellularLocation>
        <location evidence="5 7">Nucleus</location>
    </subcellularLocation>
    <text evidence="7">Phosphorylation of Ser-348 is required for translocation to the nucleus.</text>
</comment>
<comment type="alternative products">
    <event type="alternative splicing"/>
    <isoform>
        <id>O00204-1</id>
        <name>1</name>
        <name>SULT2B1b</name>
        <name>B</name>
        <sequence type="displayed"/>
    </isoform>
    <isoform>
        <id>O00204-2</id>
        <name>2</name>
        <name>SULT2B1a</name>
        <name>A</name>
        <sequence type="described" ref="VSP_012510"/>
    </isoform>
</comment>
<comment type="tissue specificity">
    <text evidence="8 9">Expressed in the stratum granulosum-stratum corneum junction in the skin (at protein level) (PubMed:28575648). Expressed highly in placenta, prostate and trachea and lower expression in the small intestine and lung (PubMed:9799594).</text>
</comment>
<comment type="domain">
    <text evidence="5">The C-terminus, which contains a proline/serine-rich region is involved in nuclear translocation and enzymatic thermostability.</text>
</comment>
<comment type="PTM">
    <text evidence="5">Phosphorylated.</text>
</comment>
<comment type="disease" evidence="8">
    <disease id="DI-05040">
        <name>Ichthyosis, congenital, autosomal recessive 14</name>
        <acronym>ARCI14</acronym>
        <description>A form of autosomal recessive congenital ichthyosis, a disorder of keratinization with abnormal differentiation and desquamation of the epidermis, resulting in abnormal skin scaling over the whole body. The main skin phenotypes are lamellar ichthyosis (LI) and non-bullous congenital ichthyosiform erythroderma (NCIE), although phenotypic overlap within the same patient or among patients from the same family can occur. Lamellar ichthyosis is a condition often associated with an embedment in a collodion-like membrane at birth; skin scales later develop, covering the entire body surface. Non-bullous congenital ichthyosiform erythroderma characterized by fine whitish scaling on an erythrodermal background; larger brownish scales are present on the buttocks, neck and legs.</description>
        <dbReference type="MIM" id="617571"/>
    </disease>
    <text>The disease is caused by variants affecting the gene represented in this entry.</text>
</comment>
<comment type="similarity">
    <text evidence="11">Belongs to the sulfotransferase 1 family.</text>
</comment>
<gene>
    <name type="primary">SULT2B1</name>
    <name type="synonym">HSST2</name>
</gene>